<organism>
    <name type="scientific">Streptococcus pneumoniae (strain CGSP14)</name>
    <dbReference type="NCBI Taxonomy" id="516950"/>
    <lineage>
        <taxon>Bacteria</taxon>
        <taxon>Bacillati</taxon>
        <taxon>Bacillota</taxon>
        <taxon>Bacilli</taxon>
        <taxon>Lactobacillales</taxon>
        <taxon>Streptococcaceae</taxon>
        <taxon>Streptococcus</taxon>
    </lineage>
</organism>
<dbReference type="EC" id="6.1.1.5" evidence="1"/>
<dbReference type="EMBL" id="CP001033">
    <property type="protein sequence ID" value="ACB90883.1"/>
    <property type="molecule type" value="Genomic_DNA"/>
</dbReference>
<dbReference type="RefSeq" id="WP_000768039.1">
    <property type="nucleotide sequence ID" value="NC_010582.1"/>
</dbReference>
<dbReference type="SMR" id="B2IRR4"/>
<dbReference type="KEGG" id="spw:SPCG_1631"/>
<dbReference type="HOGENOM" id="CLU_001493_7_1_9"/>
<dbReference type="GO" id="GO:0005829">
    <property type="term" value="C:cytosol"/>
    <property type="evidence" value="ECO:0007669"/>
    <property type="project" value="TreeGrafter"/>
</dbReference>
<dbReference type="GO" id="GO:0002161">
    <property type="term" value="F:aminoacyl-tRNA deacylase activity"/>
    <property type="evidence" value="ECO:0007669"/>
    <property type="project" value="InterPro"/>
</dbReference>
<dbReference type="GO" id="GO:0005524">
    <property type="term" value="F:ATP binding"/>
    <property type="evidence" value="ECO:0007669"/>
    <property type="project" value="UniProtKB-UniRule"/>
</dbReference>
<dbReference type="GO" id="GO:0004822">
    <property type="term" value="F:isoleucine-tRNA ligase activity"/>
    <property type="evidence" value="ECO:0007669"/>
    <property type="project" value="UniProtKB-UniRule"/>
</dbReference>
<dbReference type="GO" id="GO:0000049">
    <property type="term" value="F:tRNA binding"/>
    <property type="evidence" value="ECO:0007669"/>
    <property type="project" value="InterPro"/>
</dbReference>
<dbReference type="GO" id="GO:0008270">
    <property type="term" value="F:zinc ion binding"/>
    <property type="evidence" value="ECO:0007669"/>
    <property type="project" value="UniProtKB-UniRule"/>
</dbReference>
<dbReference type="GO" id="GO:0006428">
    <property type="term" value="P:isoleucyl-tRNA aminoacylation"/>
    <property type="evidence" value="ECO:0007669"/>
    <property type="project" value="UniProtKB-UniRule"/>
</dbReference>
<dbReference type="CDD" id="cd07960">
    <property type="entry name" value="Anticodon_Ia_Ile_BEm"/>
    <property type="match status" value="1"/>
</dbReference>
<dbReference type="CDD" id="cd00818">
    <property type="entry name" value="IleRS_core"/>
    <property type="match status" value="1"/>
</dbReference>
<dbReference type="FunFam" id="1.10.10.830:FF:000001">
    <property type="entry name" value="Isoleucine--tRNA ligase"/>
    <property type="match status" value="1"/>
</dbReference>
<dbReference type="FunFam" id="1.10.730.20:FF:000001">
    <property type="entry name" value="Isoleucine--tRNA ligase"/>
    <property type="match status" value="1"/>
</dbReference>
<dbReference type="FunFam" id="3.40.50.620:FF:000092">
    <property type="entry name" value="Isoleucine--tRNA ligase"/>
    <property type="match status" value="1"/>
</dbReference>
<dbReference type="FunFam" id="3.90.740.10:FF:000006">
    <property type="entry name" value="Isoleucine--tRNA ligase"/>
    <property type="match status" value="1"/>
</dbReference>
<dbReference type="Gene3D" id="1.10.730.20">
    <property type="match status" value="1"/>
</dbReference>
<dbReference type="Gene3D" id="3.40.50.620">
    <property type="entry name" value="HUPs"/>
    <property type="match status" value="2"/>
</dbReference>
<dbReference type="Gene3D" id="1.10.10.830">
    <property type="entry name" value="Ile-tRNA synthetase CP2 domain-like"/>
    <property type="match status" value="1"/>
</dbReference>
<dbReference type="Gene3D" id="3.90.740.10">
    <property type="entry name" value="Valyl/Leucyl/Isoleucyl-tRNA synthetase, editing domain"/>
    <property type="match status" value="1"/>
</dbReference>
<dbReference type="HAMAP" id="MF_02002">
    <property type="entry name" value="Ile_tRNA_synth_type1"/>
    <property type="match status" value="1"/>
</dbReference>
<dbReference type="InterPro" id="IPR001412">
    <property type="entry name" value="aa-tRNA-synth_I_CS"/>
</dbReference>
<dbReference type="InterPro" id="IPR002300">
    <property type="entry name" value="aa-tRNA-synth_Ia"/>
</dbReference>
<dbReference type="InterPro" id="IPR033708">
    <property type="entry name" value="Anticodon_Ile_BEm"/>
</dbReference>
<dbReference type="InterPro" id="IPR002301">
    <property type="entry name" value="Ile-tRNA-ligase"/>
</dbReference>
<dbReference type="InterPro" id="IPR023585">
    <property type="entry name" value="Ile-tRNA-ligase_type1"/>
</dbReference>
<dbReference type="InterPro" id="IPR050081">
    <property type="entry name" value="Ile-tRNA_ligase"/>
</dbReference>
<dbReference type="InterPro" id="IPR013155">
    <property type="entry name" value="M/V/L/I-tRNA-synth_anticd-bd"/>
</dbReference>
<dbReference type="InterPro" id="IPR014729">
    <property type="entry name" value="Rossmann-like_a/b/a_fold"/>
</dbReference>
<dbReference type="InterPro" id="IPR009080">
    <property type="entry name" value="tRNAsynth_Ia_anticodon-bd"/>
</dbReference>
<dbReference type="InterPro" id="IPR009008">
    <property type="entry name" value="Val/Leu/Ile-tRNA-synth_edit"/>
</dbReference>
<dbReference type="InterPro" id="IPR010663">
    <property type="entry name" value="Znf_FPG/IleRS"/>
</dbReference>
<dbReference type="NCBIfam" id="TIGR00392">
    <property type="entry name" value="ileS"/>
    <property type="match status" value="1"/>
</dbReference>
<dbReference type="PANTHER" id="PTHR42765:SF1">
    <property type="entry name" value="ISOLEUCINE--TRNA LIGASE, MITOCHONDRIAL"/>
    <property type="match status" value="1"/>
</dbReference>
<dbReference type="PANTHER" id="PTHR42765">
    <property type="entry name" value="SOLEUCYL-TRNA SYNTHETASE"/>
    <property type="match status" value="1"/>
</dbReference>
<dbReference type="Pfam" id="PF08264">
    <property type="entry name" value="Anticodon_1"/>
    <property type="match status" value="1"/>
</dbReference>
<dbReference type="Pfam" id="PF00133">
    <property type="entry name" value="tRNA-synt_1"/>
    <property type="match status" value="1"/>
</dbReference>
<dbReference type="Pfam" id="PF06827">
    <property type="entry name" value="zf-FPG_IleRS"/>
    <property type="match status" value="1"/>
</dbReference>
<dbReference type="PRINTS" id="PR00984">
    <property type="entry name" value="TRNASYNTHILE"/>
</dbReference>
<dbReference type="SUPFAM" id="SSF47323">
    <property type="entry name" value="Anticodon-binding domain of a subclass of class I aminoacyl-tRNA synthetases"/>
    <property type="match status" value="1"/>
</dbReference>
<dbReference type="SUPFAM" id="SSF52374">
    <property type="entry name" value="Nucleotidylyl transferase"/>
    <property type="match status" value="1"/>
</dbReference>
<dbReference type="SUPFAM" id="SSF50677">
    <property type="entry name" value="ValRS/IleRS/LeuRS editing domain"/>
    <property type="match status" value="1"/>
</dbReference>
<dbReference type="PROSITE" id="PS00178">
    <property type="entry name" value="AA_TRNA_LIGASE_I"/>
    <property type="match status" value="1"/>
</dbReference>
<reference key="1">
    <citation type="journal article" date="2009" name="BMC Genomics">
        <title>Genome evolution driven by host adaptations results in a more virulent and antimicrobial-resistant Streptococcus pneumoniae serotype 14.</title>
        <authorList>
            <person name="Ding F."/>
            <person name="Tang P."/>
            <person name="Hsu M.-H."/>
            <person name="Cui P."/>
            <person name="Hu S."/>
            <person name="Yu J."/>
            <person name="Chiu C.-H."/>
        </authorList>
    </citation>
    <scope>NUCLEOTIDE SEQUENCE [LARGE SCALE GENOMIC DNA]</scope>
    <source>
        <strain>CGSP14</strain>
    </source>
</reference>
<accession>B2IRR4</accession>
<name>SYI_STRPS</name>
<comment type="function">
    <text evidence="1">Catalyzes the attachment of isoleucine to tRNA(Ile). As IleRS can inadvertently accommodate and process structurally similar amino acids such as valine, to avoid such errors it has two additional distinct tRNA(Ile)-dependent editing activities. One activity is designated as 'pretransfer' editing and involves the hydrolysis of activated Val-AMP. The other activity is designated 'posttransfer' editing and involves deacylation of mischarged Val-tRNA(Ile).</text>
</comment>
<comment type="catalytic activity">
    <reaction evidence="1">
        <text>tRNA(Ile) + L-isoleucine + ATP = L-isoleucyl-tRNA(Ile) + AMP + diphosphate</text>
        <dbReference type="Rhea" id="RHEA:11060"/>
        <dbReference type="Rhea" id="RHEA-COMP:9666"/>
        <dbReference type="Rhea" id="RHEA-COMP:9695"/>
        <dbReference type="ChEBI" id="CHEBI:30616"/>
        <dbReference type="ChEBI" id="CHEBI:33019"/>
        <dbReference type="ChEBI" id="CHEBI:58045"/>
        <dbReference type="ChEBI" id="CHEBI:78442"/>
        <dbReference type="ChEBI" id="CHEBI:78528"/>
        <dbReference type="ChEBI" id="CHEBI:456215"/>
        <dbReference type="EC" id="6.1.1.5"/>
    </reaction>
</comment>
<comment type="cofactor">
    <cofactor evidence="1">
        <name>Zn(2+)</name>
        <dbReference type="ChEBI" id="CHEBI:29105"/>
    </cofactor>
    <text evidence="1">Binds 1 zinc ion per subunit.</text>
</comment>
<comment type="subunit">
    <text evidence="1">Monomer.</text>
</comment>
<comment type="subcellular location">
    <subcellularLocation>
        <location evidence="1">Cytoplasm</location>
    </subcellularLocation>
</comment>
<comment type="domain">
    <text evidence="1">IleRS has two distinct active sites: one for aminoacylation and one for editing. The misactivated valine is translocated from the active site to the editing site, which sterically excludes the correctly activated isoleucine. The single editing site contains two valyl binding pockets, one specific for each substrate (Val-AMP or Val-tRNA(Ile)).</text>
</comment>
<comment type="similarity">
    <text evidence="1">Belongs to the class-I aminoacyl-tRNA synthetase family. IleS type 1 subfamily.</text>
</comment>
<keyword id="KW-0030">Aminoacyl-tRNA synthetase</keyword>
<keyword id="KW-0067">ATP-binding</keyword>
<keyword id="KW-0963">Cytoplasm</keyword>
<keyword id="KW-0436">Ligase</keyword>
<keyword id="KW-0479">Metal-binding</keyword>
<keyword id="KW-0547">Nucleotide-binding</keyword>
<keyword id="KW-0648">Protein biosynthesis</keyword>
<keyword id="KW-0862">Zinc</keyword>
<protein>
    <recommendedName>
        <fullName evidence="1">Isoleucine--tRNA ligase</fullName>
        <ecNumber evidence="1">6.1.1.5</ecNumber>
    </recommendedName>
    <alternativeName>
        <fullName evidence="1">Isoleucyl-tRNA synthetase</fullName>
        <shortName evidence="1">IleRS</shortName>
    </alternativeName>
</protein>
<evidence type="ECO:0000255" key="1">
    <source>
        <dbReference type="HAMAP-Rule" id="MF_02002"/>
    </source>
</evidence>
<proteinExistence type="inferred from homology"/>
<feature type="chain" id="PRO_1000216245" description="Isoleucine--tRNA ligase">
    <location>
        <begin position="1"/>
        <end position="930"/>
    </location>
</feature>
<feature type="short sequence motif" description="'HIGH' region">
    <location>
        <begin position="57"/>
        <end position="67"/>
    </location>
</feature>
<feature type="short sequence motif" description="'KMSKS' region">
    <location>
        <begin position="595"/>
        <end position="599"/>
    </location>
</feature>
<feature type="binding site" evidence="1">
    <location>
        <position position="554"/>
    </location>
    <ligand>
        <name>L-isoleucyl-5'-AMP</name>
        <dbReference type="ChEBI" id="CHEBI:178002"/>
    </ligand>
</feature>
<feature type="binding site" evidence="1">
    <location>
        <position position="598"/>
    </location>
    <ligand>
        <name>ATP</name>
        <dbReference type="ChEBI" id="CHEBI:30616"/>
    </ligand>
</feature>
<feature type="binding site" evidence="1">
    <location>
        <position position="888"/>
    </location>
    <ligand>
        <name>Zn(2+)</name>
        <dbReference type="ChEBI" id="CHEBI:29105"/>
    </ligand>
</feature>
<feature type="binding site" evidence="1">
    <location>
        <position position="891"/>
    </location>
    <ligand>
        <name>Zn(2+)</name>
        <dbReference type="ChEBI" id="CHEBI:29105"/>
    </ligand>
</feature>
<feature type="binding site" evidence="1">
    <location>
        <position position="908"/>
    </location>
    <ligand>
        <name>Zn(2+)</name>
        <dbReference type="ChEBI" id="CHEBI:29105"/>
    </ligand>
</feature>
<feature type="binding site" evidence="1">
    <location>
        <position position="911"/>
    </location>
    <ligand>
        <name>Zn(2+)</name>
        <dbReference type="ChEBI" id="CHEBI:29105"/>
    </ligand>
</feature>
<sequence length="930" mass="105108">MKLKDTLNLGKTAFPMRAGLPTKEPVWQKEWEDAKLYQRRQELNEGKPHFVLHDGPPYANGNIHVGHAMNHISKDIIIRSKSMSGFNAPYIPGWDTHGLPIEQVLAKQGVKRKEMDLVEYLKLCREYALSQVYKQRDDFKRLGMSGDWENLYVTLTPDYEAAQIRVFGEMANKGYIYRGAKPVYWSWSSESALAEAEIEYHDLVSTSLYYANKVKDGKGILDTDTYIVVWTTTPFTITASRGLTVGADIDYVLVQPASETRKFVVAAELLTSLSEKFGWADVQVLATYRGQELNHIVTEHPWDTAVDELVILGDHVTTDSGTGIVHTAPGFGEDDYNVGIANGLEVAVTVDERGIMMANAGPEFEGQFYDKVVPTVIEKLGNLLLAQEEISHSYPFDWRTKKPIIWRAVPQWFASVSKFRQEILDAIDKVKFHTEWGKVRLYNMIRDRGDWVISRQRAWGVPLPIFYAEDGTAIMTAETIEHVAQLFEVHGSSIWWERDAKDLLPEGFTHPGSPNGEFKKETDIMDVWFDSGSSWNGVLVNRPNLTYPADLYLEGSDQYRGWFNSSLITSVANHGVAPYKQILSQGFTLDGKGEKMSKSLGNTIAPSDVEKQFGAEILRLWVTSVDSSNDVRISMDILSQVSETYRKIRNTLRFLIANTSDFNPAQDVVAYDELRSVDKYMTIRFNQLVKTIRDAYADFEFLTIYKALVNFINVDLSAFYLDFAKDVVYIEGAKSLERRQMQTVFYDILVKITKLLTPILPHTAEEIWSYLEFEAEDFVQLSELPEAQTFANQEEVLDTWAAFMDFRGQAQKALEEARNAKVIGKSLEAHLTVYPNEVVKTLLEAVNSNVAQLLIVSDLTIAEGPAPEAAVSFEDVAFTVERAAGQVCDRCRRIDPTTAERSYQAVICDHCASIVEENFAEAVAEGFEEK</sequence>
<gene>
    <name evidence="1" type="primary">ileS</name>
    <name type="ordered locus">SPCG_1631</name>
</gene>